<comment type="similarity">
    <text evidence="1">Belongs to the bacterial ribosomal protein bS21 family.</text>
</comment>
<proteinExistence type="inferred from homology"/>
<dbReference type="EMBL" id="CP001154">
    <property type="protein sequence ID" value="ACO73456.1"/>
    <property type="molecule type" value="Genomic_DNA"/>
</dbReference>
<dbReference type="RefSeq" id="WP_012695948.1">
    <property type="nucleotide sequence ID" value="NC_012559.1"/>
</dbReference>
<dbReference type="SMR" id="C1DC39"/>
<dbReference type="STRING" id="557598.LHK_00461"/>
<dbReference type="GeneID" id="75109371"/>
<dbReference type="KEGG" id="lhk:LHK_00461"/>
<dbReference type="eggNOG" id="COG0828">
    <property type="taxonomic scope" value="Bacteria"/>
</dbReference>
<dbReference type="HOGENOM" id="CLU_159258_1_2_4"/>
<dbReference type="Proteomes" id="UP000002010">
    <property type="component" value="Chromosome"/>
</dbReference>
<dbReference type="GO" id="GO:1990904">
    <property type="term" value="C:ribonucleoprotein complex"/>
    <property type="evidence" value="ECO:0007669"/>
    <property type="project" value="UniProtKB-KW"/>
</dbReference>
<dbReference type="GO" id="GO:0005840">
    <property type="term" value="C:ribosome"/>
    <property type="evidence" value="ECO:0007669"/>
    <property type="project" value="UniProtKB-KW"/>
</dbReference>
<dbReference type="GO" id="GO:0003735">
    <property type="term" value="F:structural constituent of ribosome"/>
    <property type="evidence" value="ECO:0007669"/>
    <property type="project" value="InterPro"/>
</dbReference>
<dbReference type="GO" id="GO:0006412">
    <property type="term" value="P:translation"/>
    <property type="evidence" value="ECO:0007669"/>
    <property type="project" value="UniProtKB-UniRule"/>
</dbReference>
<dbReference type="Gene3D" id="1.20.5.1150">
    <property type="entry name" value="Ribosomal protein S8"/>
    <property type="match status" value="1"/>
</dbReference>
<dbReference type="HAMAP" id="MF_00358">
    <property type="entry name" value="Ribosomal_bS21"/>
    <property type="match status" value="1"/>
</dbReference>
<dbReference type="InterPro" id="IPR001911">
    <property type="entry name" value="Ribosomal_bS21"/>
</dbReference>
<dbReference type="InterPro" id="IPR038380">
    <property type="entry name" value="Ribosomal_bS21_sf"/>
</dbReference>
<dbReference type="NCBIfam" id="TIGR00030">
    <property type="entry name" value="S21p"/>
    <property type="match status" value="1"/>
</dbReference>
<dbReference type="PANTHER" id="PTHR21109">
    <property type="entry name" value="MITOCHONDRIAL 28S RIBOSOMAL PROTEIN S21"/>
    <property type="match status" value="1"/>
</dbReference>
<dbReference type="PANTHER" id="PTHR21109:SF22">
    <property type="entry name" value="SMALL RIBOSOMAL SUBUNIT PROTEIN BS21"/>
    <property type="match status" value="1"/>
</dbReference>
<dbReference type="Pfam" id="PF01165">
    <property type="entry name" value="Ribosomal_S21"/>
    <property type="match status" value="1"/>
</dbReference>
<dbReference type="PRINTS" id="PR00976">
    <property type="entry name" value="RIBOSOMALS21"/>
</dbReference>
<protein>
    <recommendedName>
        <fullName evidence="1">Small ribosomal subunit protein bS21</fullName>
    </recommendedName>
    <alternativeName>
        <fullName evidence="2">30S ribosomal protein S21</fullName>
    </alternativeName>
</protein>
<sequence length="70" mass="8507">MPSVRVKENEPFEVAMRRFKRSIEKTGLLTELRAREFYEKPTTERKRKKAAAVKRHYKRLRSQMLPPKLY</sequence>
<name>RS21_LARHH</name>
<accession>C1DC39</accession>
<gene>
    <name evidence="1" type="primary">rpsU</name>
    <name type="ordered locus">LHK_00461</name>
</gene>
<organism>
    <name type="scientific">Laribacter hongkongensis (strain HLHK9)</name>
    <dbReference type="NCBI Taxonomy" id="557598"/>
    <lineage>
        <taxon>Bacteria</taxon>
        <taxon>Pseudomonadati</taxon>
        <taxon>Pseudomonadota</taxon>
        <taxon>Betaproteobacteria</taxon>
        <taxon>Neisseriales</taxon>
        <taxon>Aquaspirillaceae</taxon>
        <taxon>Laribacter</taxon>
    </lineage>
</organism>
<feature type="chain" id="PRO_1000194296" description="Small ribosomal subunit protein bS21">
    <location>
        <begin position="1"/>
        <end position="70"/>
    </location>
</feature>
<keyword id="KW-1185">Reference proteome</keyword>
<keyword id="KW-0687">Ribonucleoprotein</keyword>
<keyword id="KW-0689">Ribosomal protein</keyword>
<evidence type="ECO:0000255" key="1">
    <source>
        <dbReference type="HAMAP-Rule" id="MF_00358"/>
    </source>
</evidence>
<evidence type="ECO:0000305" key="2"/>
<reference key="1">
    <citation type="journal article" date="2009" name="PLoS Genet.">
        <title>The complete genome and proteome of Laribacter hongkongensis reveal potential mechanisms for adaptations to different temperatures and habitats.</title>
        <authorList>
            <person name="Woo P.C.Y."/>
            <person name="Lau S.K.P."/>
            <person name="Tse H."/>
            <person name="Teng J.L.L."/>
            <person name="Curreem S.O."/>
            <person name="Tsang A.K.L."/>
            <person name="Fan R.Y.Y."/>
            <person name="Wong G.K.M."/>
            <person name="Huang Y."/>
            <person name="Loman N.J."/>
            <person name="Snyder L.A.S."/>
            <person name="Cai J.J."/>
            <person name="Huang J.-D."/>
            <person name="Mak W."/>
            <person name="Pallen M.J."/>
            <person name="Lok S."/>
            <person name="Yuen K.-Y."/>
        </authorList>
    </citation>
    <scope>NUCLEOTIDE SEQUENCE [LARGE SCALE GENOMIC DNA]</scope>
    <source>
        <strain>HLHK9</strain>
    </source>
</reference>